<comment type="function">
    <text evidence="1 2 3">Ribosome collision sensor that activates a translation quality control pathway when a ribosome has stalled during translation (By similarity). Directly binds to the ribosome and acts as a sentinel for colliding ribosomes (By similarity). Gcn1 also acts as a positive activator of the integrated stress response (ISR) by mediating activation of eif2ak4/gcn2 in response to amino acid starvation (By similarity). Interaction with eif2ak4/gcn2 on translating ribosomes stimulates eif2ak4/gcn2 kinase activity, leading to phosphorylation of eukaryotic translation initiation factor 2 (eIF-2-alpha/eif2s1) (By similarity). EIF2S1/eIF-2-alpha phosphorylation converts EIF2S1/eIF-2-alpha into a global protein synthesis inhibitor, leading to a global attenuation of cap-dependent translation, and thus to a reduced overall utilization of amino acids, while concomitantly initiating the preferential translation of ISR-specific mRNAs, such as the transcriptional activator atf4, and hence allowing atf4-mediated reprogramming of amino acid biosynthetic gene expression to alleviate nutrient depletion (By similarity).</text>
</comment>
<comment type="subunit">
    <text evidence="1">Interacts with eif2ak4/gcn2; this interaction stimulates the eif2ak4/gcn2 kinase activity and is impaired by impact upon a variety of stress conditions, such as amino acid depletion, UV-C irradiation, proteasome inhibitor treatment and glucose deprivation. Interacts with impact; this prevents the interaction of gcn1 with eif2ak4/gcn2 and inhibits eif2ak4/gcn2 kinase activity.</text>
</comment>
<comment type="subcellular location">
    <subcellularLocation>
        <location evidence="1">Cytoplasm</location>
    </subcellularLocation>
</comment>
<comment type="similarity">
    <text evidence="6">Belongs to the GCN1 family.</text>
</comment>
<name>GCN1_DICDI</name>
<dbReference type="EMBL" id="AAFI02000031">
    <property type="protein sequence ID" value="EAL67682.1"/>
    <property type="molecule type" value="Genomic_DNA"/>
</dbReference>
<dbReference type="RefSeq" id="XP_641655.1">
    <property type="nucleotide sequence ID" value="XM_636563.1"/>
</dbReference>
<dbReference type="FunCoup" id="Q54WR2">
    <property type="interactions" value="1094"/>
</dbReference>
<dbReference type="STRING" id="44689.Q54WR2"/>
<dbReference type="PaxDb" id="44689-DDB0234065"/>
<dbReference type="EnsemblProtists" id="EAL67682">
    <property type="protein sequence ID" value="EAL67682"/>
    <property type="gene ID" value="DDB_G0279487"/>
</dbReference>
<dbReference type="GeneID" id="8622062"/>
<dbReference type="KEGG" id="ddi:DDB_G0279487"/>
<dbReference type="dictyBase" id="DDB_G0279487"/>
<dbReference type="VEuPathDB" id="AmoebaDB:DDB_G0279487"/>
<dbReference type="eggNOG" id="KOG1242">
    <property type="taxonomic scope" value="Eukaryota"/>
</dbReference>
<dbReference type="HOGENOM" id="CLU_000504_2_0_1"/>
<dbReference type="InParanoid" id="Q54WR2"/>
<dbReference type="OMA" id="SMKIFLH"/>
<dbReference type="PhylomeDB" id="Q54WR2"/>
<dbReference type="PRO" id="PR:Q54WR2"/>
<dbReference type="Proteomes" id="UP000002195">
    <property type="component" value="Chromosome 3"/>
</dbReference>
<dbReference type="GO" id="GO:0005829">
    <property type="term" value="C:cytosol"/>
    <property type="evidence" value="ECO:0000318"/>
    <property type="project" value="GO_Central"/>
</dbReference>
<dbReference type="GO" id="GO:0019887">
    <property type="term" value="F:protein kinase regulator activity"/>
    <property type="evidence" value="ECO:0000318"/>
    <property type="project" value="GO_Central"/>
</dbReference>
<dbReference type="GO" id="GO:0043022">
    <property type="term" value="F:ribosome binding"/>
    <property type="evidence" value="ECO:0000250"/>
    <property type="project" value="UniProtKB"/>
</dbReference>
<dbReference type="GO" id="GO:0034198">
    <property type="term" value="P:cellular response to amino acid starvation"/>
    <property type="evidence" value="ECO:0000318"/>
    <property type="project" value="GO_Central"/>
</dbReference>
<dbReference type="GO" id="GO:0071264">
    <property type="term" value="P:positive regulation of translational initiation in response to starvation"/>
    <property type="evidence" value="ECO:0000250"/>
    <property type="project" value="UniProtKB"/>
</dbReference>
<dbReference type="GO" id="GO:1990611">
    <property type="term" value="P:regulation of cytoplasmic translational initiation in response to stress"/>
    <property type="evidence" value="ECO:0000250"/>
    <property type="project" value="UniProtKB"/>
</dbReference>
<dbReference type="GO" id="GO:0006417">
    <property type="term" value="P:regulation of translation"/>
    <property type="evidence" value="ECO:0000318"/>
    <property type="project" value="GO_Central"/>
</dbReference>
<dbReference type="GO" id="GO:0006448">
    <property type="term" value="P:regulation of translational elongation"/>
    <property type="evidence" value="ECO:0000250"/>
    <property type="project" value="dictyBase"/>
</dbReference>
<dbReference type="FunFam" id="1.25.10.10:FF:000096">
    <property type="entry name" value="eIF-2-alpha kinase activator gcn1"/>
    <property type="match status" value="1"/>
</dbReference>
<dbReference type="FunFam" id="1.25.10.10:FF:000162">
    <property type="entry name" value="GCN1, eIF2 alpha kinase activator homolog"/>
    <property type="match status" value="1"/>
</dbReference>
<dbReference type="Gene3D" id="1.25.10.10">
    <property type="entry name" value="Leucine-rich Repeat Variant"/>
    <property type="match status" value="6"/>
</dbReference>
<dbReference type="InterPro" id="IPR011989">
    <property type="entry name" value="ARM-like"/>
</dbReference>
<dbReference type="InterPro" id="IPR016024">
    <property type="entry name" value="ARM-type_fold"/>
</dbReference>
<dbReference type="InterPro" id="IPR056810">
    <property type="entry name" value="GNC1-like_N"/>
</dbReference>
<dbReference type="InterPro" id="IPR021133">
    <property type="entry name" value="HEAT_type_2"/>
</dbReference>
<dbReference type="InterPro" id="IPR034085">
    <property type="entry name" value="TOG"/>
</dbReference>
<dbReference type="PANTHER" id="PTHR23346:SF7">
    <property type="entry name" value="STALLED RIBOSOME SENSOR GCN1"/>
    <property type="match status" value="1"/>
</dbReference>
<dbReference type="PANTHER" id="PTHR23346">
    <property type="entry name" value="TRANSLATIONAL ACTIVATOR GCN1-RELATED"/>
    <property type="match status" value="1"/>
</dbReference>
<dbReference type="Pfam" id="PF24993">
    <property type="entry name" value="GNC1_N"/>
    <property type="match status" value="1"/>
</dbReference>
<dbReference type="Pfam" id="PF24984">
    <property type="entry name" value="HEAT_EF3_GNC1"/>
    <property type="match status" value="1"/>
</dbReference>
<dbReference type="Pfam" id="PF24987">
    <property type="entry name" value="HEAT_EF3_N"/>
    <property type="match status" value="2"/>
</dbReference>
<dbReference type="Pfam" id="PF23271">
    <property type="entry name" value="HEAT_GCN1"/>
    <property type="match status" value="1"/>
</dbReference>
<dbReference type="SMART" id="SM01349">
    <property type="entry name" value="TOG"/>
    <property type="match status" value="2"/>
</dbReference>
<dbReference type="SUPFAM" id="SSF48371">
    <property type="entry name" value="ARM repeat"/>
    <property type="match status" value="3"/>
</dbReference>
<dbReference type="PROSITE" id="PS50077">
    <property type="entry name" value="HEAT_REPEAT"/>
    <property type="match status" value="3"/>
</dbReference>
<sequence>MNEENPSSSIILDDQQQQDSFYSEIKELEKSIQSNKLSERKNTLTRINSIGKHELSTQENDATTTTTTTTVDLEEKLKVLIYLYFTSYSIGPDSQWIFSLVQSLKQLFKDISSATNTSLVTDELKINIVKFTLREIGRLAKLLPTNKRSKYVPQNTLMSFSLVLLNYFIDQIQSNSDLTTLLFAAQELLYRELTLQHMKNNQPIFNQILNKNKILTFYQNIVTKDSSNKSFFIVYFLLRNFTDQSNKQKEQDNTFKINDLLNIYNKTVIGSSQQKIEEHKFFKRLFNQLTNEDLQSIILPPLSRHIKRDQDQVFKILIFILENLSSDFNVIDLSSLLKSMLLPMLLPVIQSTISIEENRKLLKKTFTLIIERSKDTKLISSMITDDLLKTLSVAGNPSQKLIIISIISSIISTKNFIERLSLTTEKLQLSKQILQSISIYLEKELNKDNRNKGFKLLGKVMKMVEELPEQTIKIITNSLKNDDDIIKGQVILSLSKSLGPEANGTNKKVIQIINGFTETINTILKNVKNAKTCDPSTTTASLHYMLSLITTTGVPKNDIFTKYSTDKTTISNLYASTSFLHTDGFIQRTSKKDHAIDLLLTLFLRVKSFPSIKLNDKSPLYSSVLNCLLHSQWSVSKHSAIKIRSILSRNDSVDIDYPLLSNQLLIEFSTILFDDSLIITPQIINSNVESTTTTTTTISNKKNYLIAFRSILSKNIKSELYPMLSLICYHPFINYNWKRVSSLIQNDVNTTLSSNAIEISKYIFEKGLNQKKNKSYQQAFQQAINGLMNYNVPLLNEELVKLMVKALSYEPVLAITQQQWSIYHTLPTELFVEKQEQLVESRNDRKVKPKTAEEQRDEESRKRIEEKKKIQSGELEKQEKERQKQLAAQAVIRKDVQDVIDRLHLAMDTCQTMAKSSSNPQFVGEFMSPIIVALLQLMKHEITNHQFTQVFEKLICCVPSRFKLDRSFARHYIYIINNIYYRPTLSEIQILGFIQKILTHIRESIAKEALSGFAFNYFWPIIKNGLETTISFTIQEISMEIIQKHTAQGQAYPRGSMISSLIIVVSTNSRLEAQARNTIFQLIEGVETSDIGELMEGIISKHVQVRSICLQAIEKIPSIYSPSFVWEDKYIGSLWFARFDNHDANTSALAEKIWLATNQPTQLPEDFMKLLSDSTFNVNSETRKINALAIKEAATCHTHMIPEIVDNLFEIYEQNYPDEIRETPITSKFRISVATALSGLGNAIVEPEVLKSLFTKIIERGLFDPKEEVVQEFVSTGMSIINQQGVQFSGELLATFEAFLARPDNGTGEEDSIRANVVVYMGALAKHMDASNPKVSIVIDKLVDALSIPSESVQVGISKCIAQLIPSFKKQGDRLIPMLLEKLKNSSGNYADRRGAAFGLAGSVKGLGIGSLKNYSILDTLQSYIEDKKHPTSRQGALFAFECLCNTIGRVFEPYIIHILPKLLVCFGDNVSEVRDATADTAKAIMSQLSGHGVKIVLPALLKALDDRSWRTKEGSIELLGAMAFCAPKQLSSCLPTIVPKLTYVLNDTHTKVQEAAKEALSHIGSVIRNPEIQIHVPLLLQTYDDPEIHSKELLENLLSTNYVHTIDPASLSLLLPILERTLKERSSELKKMSCQIVGNLCSLTEPKDLVPYLNILMPVMKTVLLDPIPEVRAICARALGLLVRGMGEENFSTLIPWLLETVKSDQGAVERSGAAQGLSEVLASLDISRFNSLINELLAMTNSPRPHVREGILSIFIFTPISLGDLFLPYLPKVLPQVLKGLADDSDPVREVCMRCGQSIVLQFAVTGIEVIVPALEKVLFHENWRIRLSCVQLFGDLLFKLAGTTAQEVQSNNSSYNAKDDDDDEPGSSGNDIQKILGKERLGRILSSLYMMRFDNNSSVRQKVLLIWKYIVSNTPKTLREILPTLIEMIISSIGSNNVEKRQISAKTLGDIVSKLSDRILPEILPILERGLRSELEETRQGVCIGLSEVISSAKTQLLPYLSSVVTCITKALCDPLIDVREAAAKAFDHLYHTFGSKASNEILPQLIQLLDNSNNKDLAGYALDGLRQVILVRSSIVLPVLIPKLLSRPISTSNVTALSSLAADAGEGLYVHLSTIIPSLIESFTNPNTISNAKEIKEAAVSICKSIDEQGWDTLIGLLIEQTEIRLPNIRLGACELIGEFYNGNTMVTEYPEELLLSLLSLFNDPDALVQQAANNALGFITKSLKKDNLTYLPVFQKGIQLLVNETYEEVSTIPGFCLPKGLASVLPVLISGLMYGTSDQREQATNTLRTVINHTSADALKPFVMQITGPLILVIGDKFPWQVKSAILQTLSLLISKSPASMKIFLHQLQPTFIKCLSDSHKNVRTNAASALGLLMTLSSSVDQLVNSLITGISTADSISQESKLRALQSIFEKKPKVEQATLDKAIATIVDFLYQPSDDLRSMVAQTIGASSKCFTSLTELNQFIKTNLISPSQSVLSRYGKSLALGEIFKASGKNLIDSQSPNMPTIIKIIQTDCRDEKGPIRESSAYLAEAILVASPLTYAKDLVPSICHLIGDQSSSVSISALNVIKRFCKSNQQLSRQYLRDIVVPTMNRLKERTNLPLKLAAERTLVHSLQIFKESIVMDDLIKQLELSGDSSMANSLIDYHKRVLMKLSPDSDIEK</sequence>
<keyword id="KW-0010">Activator</keyword>
<keyword id="KW-0963">Cytoplasm</keyword>
<keyword id="KW-1185">Reference proteome</keyword>
<keyword id="KW-0677">Repeat</keyword>
<keyword id="KW-0346">Stress response</keyword>
<keyword id="KW-0810">Translation regulation</keyword>
<proteinExistence type="inferred from homology"/>
<gene>
    <name evidence="1" type="primary">gcn1</name>
    <name type="synonym">gcn1l1</name>
    <name type="ORF">DDB_G0279487</name>
</gene>
<accession>Q54WR2</accession>
<reference key="1">
    <citation type="journal article" date="2005" name="Nature">
        <title>The genome of the social amoeba Dictyostelium discoideum.</title>
        <authorList>
            <person name="Eichinger L."/>
            <person name="Pachebat J.A."/>
            <person name="Gloeckner G."/>
            <person name="Rajandream M.A."/>
            <person name="Sucgang R."/>
            <person name="Berriman M."/>
            <person name="Song J."/>
            <person name="Olsen R."/>
            <person name="Szafranski K."/>
            <person name="Xu Q."/>
            <person name="Tunggal B."/>
            <person name="Kummerfeld S."/>
            <person name="Madera M."/>
            <person name="Konfortov B.A."/>
            <person name="Rivero F."/>
            <person name="Bankier A.T."/>
            <person name="Lehmann R."/>
            <person name="Hamlin N."/>
            <person name="Davies R."/>
            <person name="Gaudet P."/>
            <person name="Fey P."/>
            <person name="Pilcher K."/>
            <person name="Chen G."/>
            <person name="Saunders D."/>
            <person name="Sodergren E.J."/>
            <person name="Davis P."/>
            <person name="Kerhornou A."/>
            <person name="Nie X."/>
            <person name="Hall N."/>
            <person name="Anjard C."/>
            <person name="Hemphill L."/>
            <person name="Bason N."/>
            <person name="Farbrother P."/>
            <person name="Desany B."/>
            <person name="Just E."/>
            <person name="Morio T."/>
            <person name="Rost R."/>
            <person name="Churcher C.M."/>
            <person name="Cooper J."/>
            <person name="Haydock S."/>
            <person name="van Driessche N."/>
            <person name="Cronin A."/>
            <person name="Goodhead I."/>
            <person name="Muzny D.M."/>
            <person name="Mourier T."/>
            <person name="Pain A."/>
            <person name="Lu M."/>
            <person name="Harper D."/>
            <person name="Lindsay R."/>
            <person name="Hauser H."/>
            <person name="James K.D."/>
            <person name="Quiles M."/>
            <person name="Madan Babu M."/>
            <person name="Saito T."/>
            <person name="Buchrieser C."/>
            <person name="Wardroper A."/>
            <person name="Felder M."/>
            <person name="Thangavelu M."/>
            <person name="Johnson D."/>
            <person name="Knights A."/>
            <person name="Loulseged H."/>
            <person name="Mungall K.L."/>
            <person name="Oliver K."/>
            <person name="Price C."/>
            <person name="Quail M.A."/>
            <person name="Urushihara H."/>
            <person name="Hernandez J."/>
            <person name="Rabbinowitsch E."/>
            <person name="Steffen D."/>
            <person name="Sanders M."/>
            <person name="Ma J."/>
            <person name="Kohara Y."/>
            <person name="Sharp S."/>
            <person name="Simmonds M.N."/>
            <person name="Spiegler S."/>
            <person name="Tivey A."/>
            <person name="Sugano S."/>
            <person name="White B."/>
            <person name="Walker D."/>
            <person name="Woodward J.R."/>
            <person name="Winckler T."/>
            <person name="Tanaka Y."/>
            <person name="Shaulsky G."/>
            <person name="Schleicher M."/>
            <person name="Weinstock G.M."/>
            <person name="Rosenthal A."/>
            <person name="Cox E.C."/>
            <person name="Chisholm R.L."/>
            <person name="Gibbs R.A."/>
            <person name="Loomis W.F."/>
            <person name="Platzer M."/>
            <person name="Kay R.R."/>
            <person name="Williams J.G."/>
            <person name="Dear P.H."/>
            <person name="Noegel A.A."/>
            <person name="Barrell B.G."/>
            <person name="Kuspa A."/>
        </authorList>
    </citation>
    <scope>NUCLEOTIDE SEQUENCE [LARGE SCALE GENOMIC DNA]</scope>
    <source>
        <strain>AX4</strain>
    </source>
</reference>
<organism>
    <name type="scientific">Dictyostelium discoideum</name>
    <name type="common">Social amoeba</name>
    <dbReference type="NCBI Taxonomy" id="44689"/>
    <lineage>
        <taxon>Eukaryota</taxon>
        <taxon>Amoebozoa</taxon>
        <taxon>Evosea</taxon>
        <taxon>Eumycetozoa</taxon>
        <taxon>Dictyostelia</taxon>
        <taxon>Dictyosteliales</taxon>
        <taxon>Dictyosteliaceae</taxon>
        <taxon>Dictyostelium</taxon>
    </lineage>
</organism>
<evidence type="ECO:0000250" key="1">
    <source>
        <dbReference type="UniProtKB" id="E9PVA8"/>
    </source>
</evidence>
<evidence type="ECO:0000250" key="2">
    <source>
        <dbReference type="UniProtKB" id="P33892"/>
    </source>
</evidence>
<evidence type="ECO:0000250" key="3">
    <source>
        <dbReference type="UniProtKB" id="Q92616"/>
    </source>
</evidence>
<evidence type="ECO:0000255" key="4"/>
<evidence type="ECO:0000256" key="5">
    <source>
        <dbReference type="SAM" id="MobiDB-lite"/>
    </source>
</evidence>
<evidence type="ECO:0000305" key="6"/>
<protein>
    <recommendedName>
        <fullName evidence="1">eIF-2-alpha kinase activator GCN1</fullName>
    </recommendedName>
    <alternativeName>
        <fullName evidence="1">GCN1-like protein 1</fullName>
    </alternativeName>
    <alternativeName>
        <fullName evidence="1">Translational activator gcn1</fullName>
    </alternativeName>
</protein>
<feature type="chain" id="PRO_0000330848" description="eIF-2-alpha kinase activator GCN1">
    <location>
        <begin position="1"/>
        <end position="2667"/>
    </location>
</feature>
<feature type="repeat" description="HEAT 1" evidence="4">
    <location>
        <begin position="19"/>
        <end position="56"/>
    </location>
</feature>
<feature type="repeat" description="HEAT 2" evidence="4">
    <location>
        <begin position="95"/>
        <end position="132"/>
    </location>
</feature>
<feature type="repeat" description="HEAT 3" evidence="4">
    <location>
        <begin position="159"/>
        <end position="198"/>
    </location>
</feature>
<feature type="repeat" description="HEAT 4" evidence="4">
    <location>
        <begin position="293"/>
        <end position="330"/>
    </location>
</feature>
<feature type="repeat" description="HEAT 5" evidence="4">
    <location>
        <begin position="336"/>
        <end position="375"/>
    </location>
</feature>
<feature type="repeat" description="HEAT 6" evidence="4">
    <location>
        <begin position="398"/>
        <end position="439"/>
    </location>
</feature>
<feature type="repeat" description="HEAT 7" evidence="4">
    <location>
        <begin position="466"/>
        <end position="503"/>
    </location>
</feature>
<feature type="repeat" description="HEAT 8" evidence="4">
    <location>
        <begin position="794"/>
        <end position="832"/>
    </location>
</feature>
<feature type="repeat" description="HEAT 9" evidence="4">
    <location>
        <begin position="929"/>
        <end position="967"/>
    </location>
</feature>
<feature type="repeat" description="HEAT 10" evidence="4">
    <location>
        <begin position="985"/>
        <end position="1024"/>
    </location>
</feature>
<feature type="repeat" description="HEAT 11" evidence="4">
    <location>
        <begin position="1085"/>
        <end position="1122"/>
    </location>
</feature>
<feature type="repeat" description="HEAT 12" evidence="4">
    <location>
        <begin position="1199"/>
        <end position="1237"/>
    </location>
</feature>
<feature type="repeat" description="HEAT 13" evidence="4">
    <location>
        <begin position="1290"/>
        <end position="1330"/>
    </location>
</feature>
<feature type="repeat" description="HEAT 14" evidence="4">
    <location>
        <begin position="1333"/>
        <end position="1370"/>
    </location>
</feature>
<feature type="repeat" description="HEAT 15" evidence="4">
    <location>
        <begin position="1371"/>
        <end position="1407"/>
    </location>
</feature>
<feature type="repeat" description="HEAT 16" evidence="4">
    <location>
        <begin position="1412"/>
        <end position="1450"/>
    </location>
</feature>
<feature type="repeat" description="HEAT 17" evidence="4">
    <location>
        <begin position="1454"/>
        <end position="1491"/>
    </location>
</feature>
<feature type="repeat" description="HEAT 18" evidence="4">
    <location>
        <begin position="1492"/>
        <end position="1529"/>
    </location>
</feature>
<feature type="repeat" description="HEAT 19" evidence="4">
    <location>
        <begin position="1533"/>
        <end position="1570"/>
    </location>
</feature>
<feature type="repeat" description="HEAT 20" evidence="4">
    <location>
        <begin position="1572"/>
        <end position="1608"/>
    </location>
</feature>
<feature type="repeat" description="HEAT 21" evidence="4">
    <location>
        <begin position="1610"/>
        <end position="1647"/>
    </location>
</feature>
<feature type="repeat" description="HEAT 22" evidence="4">
    <location>
        <begin position="1652"/>
        <end position="1689"/>
    </location>
</feature>
<feature type="repeat" description="HEAT 23" evidence="4">
    <location>
        <begin position="1691"/>
        <end position="1728"/>
    </location>
</feature>
<feature type="repeat" description="HEAT 24" evidence="4">
    <location>
        <begin position="1729"/>
        <end position="1766"/>
    </location>
</feature>
<feature type="repeat" description="HEAT 25" evidence="4">
    <location>
        <begin position="1770"/>
        <end position="1807"/>
    </location>
</feature>
<feature type="repeat" description="HEAT 26" evidence="4">
    <location>
        <begin position="1809"/>
        <end position="1845"/>
    </location>
</feature>
<feature type="repeat" description="HEAT 27" evidence="4">
    <location>
        <begin position="1882"/>
        <end position="1919"/>
    </location>
</feature>
<feature type="repeat" description="HEAT 28" evidence="4">
    <location>
        <begin position="1923"/>
        <end position="1960"/>
    </location>
</feature>
<feature type="repeat" description="HEAT 29" evidence="4">
    <location>
        <begin position="1962"/>
        <end position="1998"/>
    </location>
</feature>
<feature type="repeat" description="HEAT 30" evidence="4">
    <location>
        <begin position="2002"/>
        <end position="2039"/>
    </location>
</feature>
<feature type="repeat" description="HEAT 31" evidence="4">
    <location>
        <begin position="2040"/>
        <end position="2078"/>
    </location>
</feature>
<feature type="repeat" description="HEAT 32" evidence="4">
    <location>
        <begin position="2080"/>
        <end position="2110"/>
    </location>
</feature>
<feature type="repeat" description="HEAT 33" evidence="4">
    <location>
        <begin position="2114"/>
        <end position="2152"/>
    </location>
</feature>
<feature type="repeat" description="HEAT 34" evidence="4">
    <location>
        <begin position="2154"/>
        <end position="2190"/>
    </location>
</feature>
<feature type="repeat" description="HEAT 35" evidence="4">
    <location>
        <begin position="2193"/>
        <end position="2230"/>
    </location>
</feature>
<feature type="repeat" description="HEAT 36" evidence="4">
    <location>
        <begin position="2264"/>
        <end position="2301"/>
    </location>
</feature>
<feature type="repeat" description="HEAT 37; degenerate" evidence="4">
    <location>
        <begin position="2326"/>
        <end position="2348"/>
    </location>
</feature>
<feature type="repeat" description="HEAT 38; degenerate" evidence="4">
    <location>
        <begin position="2349"/>
        <end position="2385"/>
    </location>
</feature>
<feature type="repeat" description="HEAT 39" evidence="4">
    <location>
        <begin position="2387"/>
        <end position="2421"/>
    </location>
</feature>
<feature type="repeat" description="HEAT 40" evidence="4">
    <location>
        <begin position="2425"/>
        <end position="2462"/>
    </location>
</feature>
<feature type="repeat" description="HEAT 41" evidence="4">
    <location>
        <begin position="2508"/>
        <end position="2545"/>
    </location>
</feature>
<feature type="repeat" description="HEAT 42" evidence="4">
    <location>
        <begin position="2546"/>
        <end position="2583"/>
    </location>
</feature>
<feature type="region of interest" description="Disordered" evidence="5">
    <location>
        <begin position="842"/>
        <end position="879"/>
    </location>
</feature>
<feature type="region of interest" description="Disordered" evidence="5">
    <location>
        <begin position="1853"/>
        <end position="1875"/>
    </location>
</feature>
<feature type="region of interest" description="RWDBD region" evidence="2">
    <location>
        <begin position="2265"/>
        <end position="2412"/>
    </location>
</feature>